<proteinExistence type="predicted"/>
<name>YOZO_BACSU</name>
<gene>
    <name type="primary">yozO</name>
    <name type="ordered locus">BSU19290</name>
</gene>
<accession>O31847</accession>
<protein>
    <recommendedName>
        <fullName>Uncharacterized protein YozO</fullName>
    </recommendedName>
</protein>
<sequence>MGIFSVSRSTDAKKLEALLVEGERIESIYKLRVDQICFTNKRIIFFDNKMFSKKKVRVFLPYKTIESFAIQEAGMFDPDTGLLLMTRSKTFELEFAKDTDLSEVQAVLTKHLCS</sequence>
<dbReference type="EMBL" id="AL009126">
    <property type="protein sequence ID" value="CAB13821.1"/>
    <property type="molecule type" value="Genomic_DNA"/>
</dbReference>
<dbReference type="PIR" id="C69932">
    <property type="entry name" value="C69932"/>
</dbReference>
<dbReference type="RefSeq" id="NP_389811.1">
    <property type="nucleotide sequence ID" value="NC_000964.3"/>
</dbReference>
<dbReference type="RefSeq" id="WP_003220141.1">
    <property type="nucleotide sequence ID" value="NZ_OZ025638.1"/>
</dbReference>
<dbReference type="SMR" id="O31847"/>
<dbReference type="FunCoup" id="O31847">
    <property type="interactions" value="4"/>
</dbReference>
<dbReference type="STRING" id="224308.BSU19290"/>
<dbReference type="jPOST" id="O31847"/>
<dbReference type="PaxDb" id="224308-BSU19290"/>
<dbReference type="EnsemblBacteria" id="CAB13821">
    <property type="protein sequence ID" value="CAB13821"/>
    <property type="gene ID" value="BSU_19290"/>
</dbReference>
<dbReference type="GeneID" id="939681"/>
<dbReference type="KEGG" id="bsu:BSU19290"/>
<dbReference type="PATRIC" id="fig|224308.179.peg.2110"/>
<dbReference type="eggNOG" id="ENOG50303Q6">
    <property type="taxonomic scope" value="Bacteria"/>
</dbReference>
<dbReference type="InParanoid" id="O31847"/>
<dbReference type="OrthoDB" id="9803613at2"/>
<dbReference type="PhylomeDB" id="O31847"/>
<dbReference type="BioCyc" id="BSUB:BSU19290-MONOMER"/>
<dbReference type="PRO" id="PR:O31847"/>
<dbReference type="Proteomes" id="UP000001570">
    <property type="component" value="Chromosome"/>
</dbReference>
<dbReference type="CDD" id="cd13225">
    <property type="entry name" value="PH-like_bacteria"/>
    <property type="match status" value="1"/>
</dbReference>
<dbReference type="Gene3D" id="2.30.29.50">
    <property type="entry name" value="Bacterial Pleckstrin homology domain"/>
    <property type="match status" value="1"/>
</dbReference>
<dbReference type="InterPro" id="IPR012544">
    <property type="entry name" value="PHb"/>
</dbReference>
<dbReference type="InterPro" id="IPR037063">
    <property type="entry name" value="PHb_sf"/>
</dbReference>
<dbReference type="PANTHER" id="PTHR35796:SF3">
    <property type="entry name" value="BHLH DOMAIN-CONTAINING PROTEIN"/>
    <property type="match status" value="1"/>
</dbReference>
<dbReference type="PANTHER" id="PTHR35796">
    <property type="entry name" value="HYPOTHETICAL CYTOSOLIC PROTEIN"/>
    <property type="match status" value="1"/>
</dbReference>
<dbReference type="Pfam" id="PF08000">
    <property type="entry name" value="bPH_1"/>
    <property type="match status" value="1"/>
</dbReference>
<dbReference type="SUPFAM" id="SSF50729">
    <property type="entry name" value="PH domain-like"/>
    <property type="match status" value="1"/>
</dbReference>
<feature type="chain" id="PRO_0000389005" description="Uncharacterized protein YozO">
    <location>
        <begin position="1"/>
        <end position="114"/>
    </location>
</feature>
<keyword id="KW-1185">Reference proteome</keyword>
<organism>
    <name type="scientific">Bacillus subtilis (strain 168)</name>
    <dbReference type="NCBI Taxonomy" id="224308"/>
    <lineage>
        <taxon>Bacteria</taxon>
        <taxon>Bacillati</taxon>
        <taxon>Bacillota</taxon>
        <taxon>Bacilli</taxon>
        <taxon>Bacillales</taxon>
        <taxon>Bacillaceae</taxon>
        <taxon>Bacillus</taxon>
    </lineage>
</organism>
<reference key="1">
    <citation type="journal article" date="1997" name="Nature">
        <title>The complete genome sequence of the Gram-positive bacterium Bacillus subtilis.</title>
        <authorList>
            <person name="Kunst F."/>
            <person name="Ogasawara N."/>
            <person name="Moszer I."/>
            <person name="Albertini A.M."/>
            <person name="Alloni G."/>
            <person name="Azevedo V."/>
            <person name="Bertero M.G."/>
            <person name="Bessieres P."/>
            <person name="Bolotin A."/>
            <person name="Borchert S."/>
            <person name="Borriss R."/>
            <person name="Boursier L."/>
            <person name="Brans A."/>
            <person name="Braun M."/>
            <person name="Brignell S.C."/>
            <person name="Bron S."/>
            <person name="Brouillet S."/>
            <person name="Bruschi C.V."/>
            <person name="Caldwell B."/>
            <person name="Capuano V."/>
            <person name="Carter N.M."/>
            <person name="Choi S.-K."/>
            <person name="Codani J.-J."/>
            <person name="Connerton I.F."/>
            <person name="Cummings N.J."/>
            <person name="Daniel R.A."/>
            <person name="Denizot F."/>
            <person name="Devine K.M."/>
            <person name="Duesterhoeft A."/>
            <person name="Ehrlich S.D."/>
            <person name="Emmerson P.T."/>
            <person name="Entian K.-D."/>
            <person name="Errington J."/>
            <person name="Fabret C."/>
            <person name="Ferrari E."/>
            <person name="Foulger D."/>
            <person name="Fritz C."/>
            <person name="Fujita M."/>
            <person name="Fujita Y."/>
            <person name="Fuma S."/>
            <person name="Galizzi A."/>
            <person name="Galleron N."/>
            <person name="Ghim S.-Y."/>
            <person name="Glaser P."/>
            <person name="Goffeau A."/>
            <person name="Golightly E.J."/>
            <person name="Grandi G."/>
            <person name="Guiseppi G."/>
            <person name="Guy B.J."/>
            <person name="Haga K."/>
            <person name="Haiech J."/>
            <person name="Harwood C.R."/>
            <person name="Henaut A."/>
            <person name="Hilbert H."/>
            <person name="Holsappel S."/>
            <person name="Hosono S."/>
            <person name="Hullo M.-F."/>
            <person name="Itaya M."/>
            <person name="Jones L.-M."/>
            <person name="Joris B."/>
            <person name="Karamata D."/>
            <person name="Kasahara Y."/>
            <person name="Klaerr-Blanchard M."/>
            <person name="Klein C."/>
            <person name="Kobayashi Y."/>
            <person name="Koetter P."/>
            <person name="Koningstein G."/>
            <person name="Krogh S."/>
            <person name="Kumano M."/>
            <person name="Kurita K."/>
            <person name="Lapidus A."/>
            <person name="Lardinois S."/>
            <person name="Lauber J."/>
            <person name="Lazarevic V."/>
            <person name="Lee S.-M."/>
            <person name="Levine A."/>
            <person name="Liu H."/>
            <person name="Masuda S."/>
            <person name="Mauel C."/>
            <person name="Medigue C."/>
            <person name="Medina N."/>
            <person name="Mellado R.P."/>
            <person name="Mizuno M."/>
            <person name="Moestl D."/>
            <person name="Nakai S."/>
            <person name="Noback M."/>
            <person name="Noone D."/>
            <person name="O'Reilly M."/>
            <person name="Ogawa K."/>
            <person name="Ogiwara A."/>
            <person name="Oudega B."/>
            <person name="Park S.-H."/>
            <person name="Parro V."/>
            <person name="Pohl T.M."/>
            <person name="Portetelle D."/>
            <person name="Porwollik S."/>
            <person name="Prescott A.M."/>
            <person name="Presecan E."/>
            <person name="Pujic P."/>
            <person name="Purnelle B."/>
            <person name="Rapoport G."/>
            <person name="Rey M."/>
            <person name="Reynolds S."/>
            <person name="Rieger M."/>
            <person name="Rivolta C."/>
            <person name="Rocha E."/>
            <person name="Roche B."/>
            <person name="Rose M."/>
            <person name="Sadaie Y."/>
            <person name="Sato T."/>
            <person name="Scanlan E."/>
            <person name="Schleich S."/>
            <person name="Schroeter R."/>
            <person name="Scoffone F."/>
            <person name="Sekiguchi J."/>
            <person name="Sekowska A."/>
            <person name="Seror S.J."/>
            <person name="Serror P."/>
            <person name="Shin B.-S."/>
            <person name="Soldo B."/>
            <person name="Sorokin A."/>
            <person name="Tacconi E."/>
            <person name="Takagi T."/>
            <person name="Takahashi H."/>
            <person name="Takemaru K."/>
            <person name="Takeuchi M."/>
            <person name="Tamakoshi A."/>
            <person name="Tanaka T."/>
            <person name="Terpstra P."/>
            <person name="Tognoni A."/>
            <person name="Tosato V."/>
            <person name="Uchiyama S."/>
            <person name="Vandenbol M."/>
            <person name="Vannier F."/>
            <person name="Vassarotti A."/>
            <person name="Viari A."/>
            <person name="Wambutt R."/>
            <person name="Wedler E."/>
            <person name="Wedler H."/>
            <person name="Weitzenegger T."/>
            <person name="Winters P."/>
            <person name="Wipat A."/>
            <person name="Yamamoto H."/>
            <person name="Yamane K."/>
            <person name="Yasumoto K."/>
            <person name="Yata K."/>
            <person name="Yoshida K."/>
            <person name="Yoshikawa H.-F."/>
            <person name="Zumstein E."/>
            <person name="Yoshikawa H."/>
            <person name="Danchin A."/>
        </authorList>
    </citation>
    <scope>NUCLEOTIDE SEQUENCE [LARGE SCALE GENOMIC DNA]</scope>
    <source>
        <strain>168</strain>
    </source>
</reference>